<dbReference type="EC" id="6.3.2.1"/>
<dbReference type="EMBL" id="AAFI02000126">
    <property type="protein sequence ID" value="EAL62991.1"/>
    <property type="molecule type" value="Genomic_DNA"/>
</dbReference>
<dbReference type="RefSeq" id="XP_636499.1">
    <property type="nucleotide sequence ID" value="XM_631407.1"/>
</dbReference>
<dbReference type="SMR" id="Q54I80"/>
<dbReference type="FunCoup" id="Q54I80">
    <property type="interactions" value="92"/>
</dbReference>
<dbReference type="STRING" id="44689.Q54I80"/>
<dbReference type="PaxDb" id="44689-DDB0231511"/>
<dbReference type="EnsemblProtists" id="EAL62991">
    <property type="protein sequence ID" value="EAL62991"/>
    <property type="gene ID" value="DDB_G0288935"/>
</dbReference>
<dbReference type="GeneID" id="8626882"/>
<dbReference type="KEGG" id="ddi:DDB_G0288935"/>
<dbReference type="dictyBase" id="DDB_G0288935">
    <property type="gene designation" value="panC"/>
</dbReference>
<dbReference type="VEuPathDB" id="AmoebaDB:DDB_G0288935"/>
<dbReference type="eggNOG" id="KOG3042">
    <property type="taxonomic scope" value="Eukaryota"/>
</dbReference>
<dbReference type="HOGENOM" id="CLU_047148_0_0_1"/>
<dbReference type="InParanoid" id="Q54I80"/>
<dbReference type="OMA" id="CNHKLEP"/>
<dbReference type="PhylomeDB" id="Q54I80"/>
<dbReference type="UniPathway" id="UPA00028">
    <property type="reaction ID" value="UER00005"/>
</dbReference>
<dbReference type="PRO" id="PR:Q54I80"/>
<dbReference type="Proteomes" id="UP000002195">
    <property type="component" value="Chromosome 5"/>
</dbReference>
<dbReference type="GO" id="GO:0005829">
    <property type="term" value="C:cytosol"/>
    <property type="evidence" value="ECO:0000250"/>
    <property type="project" value="UniProtKB"/>
</dbReference>
<dbReference type="GO" id="GO:0005524">
    <property type="term" value="F:ATP binding"/>
    <property type="evidence" value="ECO:0007669"/>
    <property type="project" value="UniProtKB-KW"/>
</dbReference>
<dbReference type="GO" id="GO:0004592">
    <property type="term" value="F:pantoate-beta-alanine ligase activity"/>
    <property type="evidence" value="ECO:0000250"/>
    <property type="project" value="dictyBase"/>
</dbReference>
<dbReference type="GO" id="GO:0015940">
    <property type="term" value="P:pantothenate biosynthetic process"/>
    <property type="evidence" value="ECO:0000250"/>
    <property type="project" value="UniProtKB"/>
</dbReference>
<dbReference type="FunFam" id="3.40.50.620:FF:000114">
    <property type="entry name" value="Pantothenate synthetase"/>
    <property type="match status" value="1"/>
</dbReference>
<dbReference type="Gene3D" id="3.40.50.620">
    <property type="entry name" value="HUPs"/>
    <property type="match status" value="1"/>
</dbReference>
<dbReference type="Gene3D" id="3.30.1300.10">
    <property type="entry name" value="Pantoate-beta-alanine ligase, C-terminal domain"/>
    <property type="match status" value="1"/>
</dbReference>
<dbReference type="HAMAP" id="MF_00158">
    <property type="entry name" value="PanC"/>
    <property type="match status" value="1"/>
</dbReference>
<dbReference type="InterPro" id="IPR004821">
    <property type="entry name" value="Cyt_trans-like"/>
</dbReference>
<dbReference type="InterPro" id="IPR003721">
    <property type="entry name" value="Pantoate_ligase"/>
</dbReference>
<dbReference type="InterPro" id="IPR042176">
    <property type="entry name" value="Pantoate_ligase_C"/>
</dbReference>
<dbReference type="InterPro" id="IPR014729">
    <property type="entry name" value="Rossmann-like_a/b/a_fold"/>
</dbReference>
<dbReference type="NCBIfam" id="TIGR00125">
    <property type="entry name" value="cyt_tran_rel"/>
    <property type="match status" value="1"/>
</dbReference>
<dbReference type="NCBIfam" id="TIGR00018">
    <property type="entry name" value="panC"/>
    <property type="match status" value="1"/>
</dbReference>
<dbReference type="PANTHER" id="PTHR21299">
    <property type="entry name" value="CYTIDYLATE KINASE/PANTOATE-BETA-ALANINE LIGASE"/>
    <property type="match status" value="1"/>
</dbReference>
<dbReference type="PANTHER" id="PTHR21299:SF1">
    <property type="entry name" value="PANTOATE--BETA-ALANINE LIGASE"/>
    <property type="match status" value="1"/>
</dbReference>
<dbReference type="Pfam" id="PF02569">
    <property type="entry name" value="Pantoate_ligase"/>
    <property type="match status" value="1"/>
</dbReference>
<dbReference type="SUPFAM" id="SSF52374">
    <property type="entry name" value="Nucleotidylyl transferase"/>
    <property type="match status" value="1"/>
</dbReference>
<keyword id="KW-0067">ATP-binding</keyword>
<keyword id="KW-0963">Cytoplasm</keyword>
<keyword id="KW-0436">Ligase</keyword>
<keyword id="KW-0547">Nucleotide-binding</keyword>
<keyword id="KW-0566">Pantothenate biosynthesis</keyword>
<keyword id="KW-1185">Reference proteome</keyword>
<sequence length="300" mass="34105">MKELIICNNIKLIKEEIHKKKIEISKRNNKEYYEIKVGFVPTMGYLHSGHISLVERAKLENDIVVVSIFVNPTQFNANEDLSSYPSDIENDSKLLKNVGTDLLFLPTPDIMYPKESGYSTFVTVESMEQVMEGKSRPGHFRGVATIVTKLLLITTPTNLYIGQKDAMQCICIKRLVADLNIDTNVIICNTIREDTGLAKSSRNSYLSNEEQIQASSIYKILESFKNNINSFTDRQSFINEITKQLEQNPLFKVEYVSIASNITGLEIIDQFPPPKDSNLSLALLFFAEKRKTRLIDIIIL</sequence>
<feature type="chain" id="PRO_0000328042" description="Pantoate--beta-alanine ligase">
    <location>
        <begin position="1"/>
        <end position="300"/>
    </location>
</feature>
<feature type="active site" description="Proton donor" evidence="1">
    <location>
        <position position="50"/>
    </location>
</feature>
<feature type="binding site" evidence="1">
    <location>
        <begin position="43"/>
        <end position="50"/>
    </location>
    <ligand>
        <name>ATP</name>
        <dbReference type="ChEBI" id="CHEBI:30616"/>
    </ligand>
</feature>
<feature type="binding site" evidence="1">
    <location>
        <position position="74"/>
    </location>
    <ligand>
        <name>(R)-pantoate</name>
        <dbReference type="ChEBI" id="CHEBI:15980"/>
    </ligand>
</feature>
<feature type="binding site" evidence="1">
    <location>
        <position position="74"/>
    </location>
    <ligand>
        <name>beta-alanine</name>
        <dbReference type="ChEBI" id="CHEBI:57966"/>
    </ligand>
</feature>
<feature type="binding site" evidence="1">
    <location>
        <begin position="162"/>
        <end position="165"/>
    </location>
    <ligand>
        <name>ATP</name>
        <dbReference type="ChEBI" id="CHEBI:30616"/>
    </ligand>
</feature>
<feature type="binding site" evidence="1">
    <location>
        <position position="168"/>
    </location>
    <ligand>
        <name>(R)-pantoate</name>
        <dbReference type="ChEBI" id="CHEBI:15980"/>
    </ligand>
</feature>
<feature type="binding site" evidence="1">
    <location>
        <position position="191"/>
    </location>
    <ligand>
        <name>ATP</name>
        <dbReference type="ChEBI" id="CHEBI:30616"/>
    </ligand>
</feature>
<feature type="binding site" evidence="1">
    <location>
        <begin position="199"/>
        <end position="202"/>
    </location>
    <ligand>
        <name>ATP</name>
        <dbReference type="ChEBI" id="CHEBI:30616"/>
    </ligand>
</feature>
<organism>
    <name type="scientific">Dictyostelium discoideum</name>
    <name type="common">Social amoeba</name>
    <dbReference type="NCBI Taxonomy" id="44689"/>
    <lineage>
        <taxon>Eukaryota</taxon>
        <taxon>Amoebozoa</taxon>
        <taxon>Evosea</taxon>
        <taxon>Eumycetozoa</taxon>
        <taxon>Dictyostelia</taxon>
        <taxon>Dictyosteliales</taxon>
        <taxon>Dictyosteliaceae</taxon>
        <taxon>Dictyostelium</taxon>
    </lineage>
</organism>
<comment type="function">
    <text evidence="1">Catalyzes the condensation of pantoate with beta-alanine in an ATP-dependent reaction via a pantoyl-adenylate intermediate.</text>
</comment>
<comment type="catalytic activity">
    <reaction>
        <text>(R)-pantoate + beta-alanine + ATP = (R)-pantothenate + AMP + diphosphate + H(+)</text>
        <dbReference type="Rhea" id="RHEA:10912"/>
        <dbReference type="ChEBI" id="CHEBI:15378"/>
        <dbReference type="ChEBI" id="CHEBI:15980"/>
        <dbReference type="ChEBI" id="CHEBI:29032"/>
        <dbReference type="ChEBI" id="CHEBI:30616"/>
        <dbReference type="ChEBI" id="CHEBI:33019"/>
        <dbReference type="ChEBI" id="CHEBI:57966"/>
        <dbReference type="ChEBI" id="CHEBI:456215"/>
        <dbReference type="EC" id="6.3.2.1"/>
    </reaction>
</comment>
<comment type="pathway">
    <text>Cofactor biosynthesis; (R)-pantothenate biosynthesis; (R)-pantothenate from (R)-pantoate and beta-alanine: step 1/1.</text>
</comment>
<comment type="subunit">
    <text evidence="1">Homodimer.</text>
</comment>
<comment type="subcellular location">
    <subcellularLocation>
        <location evidence="1">Cytoplasm</location>
    </subcellularLocation>
</comment>
<comment type="miscellaneous">
    <text evidence="1">The reaction proceeds by a bi uni uni bi ping pong mechanism.</text>
</comment>
<comment type="similarity">
    <text evidence="2">Belongs to the pantothenate synthetase family.</text>
</comment>
<protein>
    <recommendedName>
        <fullName>Pantoate--beta-alanine ligase</fullName>
        <ecNumber>6.3.2.1</ecNumber>
    </recommendedName>
    <alternativeName>
        <fullName>Pantoate-activating enzyme</fullName>
    </alternativeName>
    <alternativeName>
        <fullName>Pantothenate synthetase</fullName>
    </alternativeName>
</protein>
<proteinExistence type="inferred from homology"/>
<name>PANC_DICDI</name>
<evidence type="ECO:0000250" key="1"/>
<evidence type="ECO:0000305" key="2"/>
<reference key="1">
    <citation type="journal article" date="2005" name="Nature">
        <title>The genome of the social amoeba Dictyostelium discoideum.</title>
        <authorList>
            <person name="Eichinger L."/>
            <person name="Pachebat J.A."/>
            <person name="Gloeckner G."/>
            <person name="Rajandream M.A."/>
            <person name="Sucgang R."/>
            <person name="Berriman M."/>
            <person name="Song J."/>
            <person name="Olsen R."/>
            <person name="Szafranski K."/>
            <person name="Xu Q."/>
            <person name="Tunggal B."/>
            <person name="Kummerfeld S."/>
            <person name="Madera M."/>
            <person name="Konfortov B.A."/>
            <person name="Rivero F."/>
            <person name="Bankier A.T."/>
            <person name="Lehmann R."/>
            <person name="Hamlin N."/>
            <person name="Davies R."/>
            <person name="Gaudet P."/>
            <person name="Fey P."/>
            <person name="Pilcher K."/>
            <person name="Chen G."/>
            <person name="Saunders D."/>
            <person name="Sodergren E.J."/>
            <person name="Davis P."/>
            <person name="Kerhornou A."/>
            <person name="Nie X."/>
            <person name="Hall N."/>
            <person name="Anjard C."/>
            <person name="Hemphill L."/>
            <person name="Bason N."/>
            <person name="Farbrother P."/>
            <person name="Desany B."/>
            <person name="Just E."/>
            <person name="Morio T."/>
            <person name="Rost R."/>
            <person name="Churcher C.M."/>
            <person name="Cooper J."/>
            <person name="Haydock S."/>
            <person name="van Driessche N."/>
            <person name="Cronin A."/>
            <person name="Goodhead I."/>
            <person name="Muzny D.M."/>
            <person name="Mourier T."/>
            <person name="Pain A."/>
            <person name="Lu M."/>
            <person name="Harper D."/>
            <person name="Lindsay R."/>
            <person name="Hauser H."/>
            <person name="James K.D."/>
            <person name="Quiles M."/>
            <person name="Madan Babu M."/>
            <person name="Saito T."/>
            <person name="Buchrieser C."/>
            <person name="Wardroper A."/>
            <person name="Felder M."/>
            <person name="Thangavelu M."/>
            <person name="Johnson D."/>
            <person name="Knights A."/>
            <person name="Loulseged H."/>
            <person name="Mungall K.L."/>
            <person name="Oliver K."/>
            <person name="Price C."/>
            <person name="Quail M.A."/>
            <person name="Urushihara H."/>
            <person name="Hernandez J."/>
            <person name="Rabbinowitsch E."/>
            <person name="Steffen D."/>
            <person name="Sanders M."/>
            <person name="Ma J."/>
            <person name="Kohara Y."/>
            <person name="Sharp S."/>
            <person name="Simmonds M.N."/>
            <person name="Spiegler S."/>
            <person name="Tivey A."/>
            <person name="Sugano S."/>
            <person name="White B."/>
            <person name="Walker D."/>
            <person name="Woodward J.R."/>
            <person name="Winckler T."/>
            <person name="Tanaka Y."/>
            <person name="Shaulsky G."/>
            <person name="Schleicher M."/>
            <person name="Weinstock G.M."/>
            <person name="Rosenthal A."/>
            <person name="Cox E.C."/>
            <person name="Chisholm R.L."/>
            <person name="Gibbs R.A."/>
            <person name="Loomis W.F."/>
            <person name="Platzer M."/>
            <person name="Kay R.R."/>
            <person name="Williams J.G."/>
            <person name="Dear P.H."/>
            <person name="Noegel A.A."/>
            <person name="Barrell B.G."/>
            <person name="Kuspa A."/>
        </authorList>
    </citation>
    <scope>NUCLEOTIDE SEQUENCE [LARGE SCALE GENOMIC DNA]</scope>
    <source>
        <strain>AX4</strain>
    </source>
</reference>
<accession>Q54I80</accession>
<gene>
    <name type="primary">panC</name>
    <name type="ORF">DDB_G0288935</name>
</gene>